<dbReference type="EMBL" id="CP000607">
    <property type="protein sequence ID" value="ABP37616.1"/>
    <property type="molecule type" value="Genomic_DNA"/>
</dbReference>
<dbReference type="SMR" id="A4SGK7"/>
<dbReference type="STRING" id="290318.Cvib_1606"/>
<dbReference type="KEGG" id="pvi:Cvib_1606"/>
<dbReference type="eggNOG" id="COG0222">
    <property type="taxonomic scope" value="Bacteria"/>
</dbReference>
<dbReference type="HOGENOM" id="CLU_086499_3_2_10"/>
<dbReference type="OrthoDB" id="9811748at2"/>
<dbReference type="GO" id="GO:0005737">
    <property type="term" value="C:cytoplasm"/>
    <property type="evidence" value="ECO:0007669"/>
    <property type="project" value="UniProtKB-ARBA"/>
</dbReference>
<dbReference type="GO" id="GO:1990904">
    <property type="term" value="C:ribonucleoprotein complex"/>
    <property type="evidence" value="ECO:0007669"/>
    <property type="project" value="UniProtKB-KW"/>
</dbReference>
<dbReference type="GO" id="GO:0005840">
    <property type="term" value="C:ribosome"/>
    <property type="evidence" value="ECO:0007669"/>
    <property type="project" value="UniProtKB-KW"/>
</dbReference>
<dbReference type="GO" id="GO:0003729">
    <property type="term" value="F:mRNA binding"/>
    <property type="evidence" value="ECO:0007669"/>
    <property type="project" value="TreeGrafter"/>
</dbReference>
<dbReference type="GO" id="GO:0003735">
    <property type="term" value="F:structural constituent of ribosome"/>
    <property type="evidence" value="ECO:0007669"/>
    <property type="project" value="InterPro"/>
</dbReference>
<dbReference type="GO" id="GO:0006412">
    <property type="term" value="P:translation"/>
    <property type="evidence" value="ECO:0007669"/>
    <property type="project" value="UniProtKB-UniRule"/>
</dbReference>
<dbReference type="CDD" id="cd00387">
    <property type="entry name" value="Ribosomal_L7_L12"/>
    <property type="match status" value="1"/>
</dbReference>
<dbReference type="FunFam" id="3.30.1390.10:FF:000001">
    <property type="entry name" value="50S ribosomal protein L7/L12"/>
    <property type="match status" value="1"/>
</dbReference>
<dbReference type="Gene3D" id="3.30.1390.10">
    <property type="match status" value="1"/>
</dbReference>
<dbReference type="Gene3D" id="1.20.5.710">
    <property type="entry name" value="Single helix bin"/>
    <property type="match status" value="1"/>
</dbReference>
<dbReference type="HAMAP" id="MF_00368">
    <property type="entry name" value="Ribosomal_bL12"/>
    <property type="match status" value="1"/>
</dbReference>
<dbReference type="InterPro" id="IPR000206">
    <property type="entry name" value="Ribosomal_bL12"/>
</dbReference>
<dbReference type="InterPro" id="IPR013823">
    <property type="entry name" value="Ribosomal_bL12_C"/>
</dbReference>
<dbReference type="InterPro" id="IPR014719">
    <property type="entry name" value="Ribosomal_bL12_C/ClpS-like"/>
</dbReference>
<dbReference type="InterPro" id="IPR008932">
    <property type="entry name" value="Ribosomal_bL12_oligo"/>
</dbReference>
<dbReference type="InterPro" id="IPR036235">
    <property type="entry name" value="Ribosomal_bL12_oligo_N_sf"/>
</dbReference>
<dbReference type="NCBIfam" id="TIGR00855">
    <property type="entry name" value="L12"/>
    <property type="match status" value="1"/>
</dbReference>
<dbReference type="PANTHER" id="PTHR45987">
    <property type="entry name" value="39S RIBOSOMAL PROTEIN L12"/>
    <property type="match status" value="1"/>
</dbReference>
<dbReference type="PANTHER" id="PTHR45987:SF4">
    <property type="entry name" value="LARGE RIBOSOMAL SUBUNIT PROTEIN BL12M"/>
    <property type="match status" value="1"/>
</dbReference>
<dbReference type="Pfam" id="PF00542">
    <property type="entry name" value="Ribosomal_L12"/>
    <property type="match status" value="1"/>
</dbReference>
<dbReference type="Pfam" id="PF16320">
    <property type="entry name" value="Ribosomal_L12_N"/>
    <property type="match status" value="1"/>
</dbReference>
<dbReference type="SUPFAM" id="SSF54736">
    <property type="entry name" value="ClpS-like"/>
    <property type="match status" value="1"/>
</dbReference>
<dbReference type="SUPFAM" id="SSF48300">
    <property type="entry name" value="Ribosomal protein L7/12, oligomerisation (N-terminal) domain"/>
    <property type="match status" value="1"/>
</dbReference>
<feature type="chain" id="PRO_1000079805" description="Large ribosomal subunit protein bL12">
    <location>
        <begin position="1"/>
        <end position="123"/>
    </location>
</feature>
<proteinExistence type="inferred from homology"/>
<reference key="1">
    <citation type="submission" date="2007-03" db="EMBL/GenBank/DDBJ databases">
        <title>Complete sequence of Prosthecochloris vibrioformis DSM 265.</title>
        <authorList>
            <consortium name="US DOE Joint Genome Institute"/>
            <person name="Copeland A."/>
            <person name="Lucas S."/>
            <person name="Lapidus A."/>
            <person name="Barry K."/>
            <person name="Detter J.C."/>
            <person name="Glavina del Rio T."/>
            <person name="Hammon N."/>
            <person name="Israni S."/>
            <person name="Pitluck S."/>
            <person name="Schmutz J."/>
            <person name="Larimer F."/>
            <person name="Land M."/>
            <person name="Hauser L."/>
            <person name="Mikhailova N."/>
            <person name="Li T."/>
            <person name="Overmann J."/>
            <person name="Schuster S.C."/>
            <person name="Bryant D.A."/>
            <person name="Richardson P."/>
        </authorList>
    </citation>
    <scope>NUCLEOTIDE SEQUENCE [LARGE SCALE GENOMIC DNA]</scope>
    <source>
        <strain>DSM 265 / 1930</strain>
    </source>
</reference>
<name>RL7_CHLPM</name>
<sequence length="123" mass="12429">MSIETLVEEIGGLTLTDAAALVKALEEKFGVSAAPAMVAGVAAAAPAAAAAEEQTEFDVVLTAAGDSKINVIKVVRAITGLGLKEAKDLVDGAPKAVKEAVSKEDAEKIVKELKDAGASVELK</sequence>
<gene>
    <name evidence="1" type="primary">rplL</name>
    <name type="ordered locus">Cvib_1606</name>
</gene>
<organism>
    <name type="scientific">Chlorobium phaeovibrioides (strain DSM 265 / 1930)</name>
    <name type="common">Prosthecochloris vibrioformis (strain DSM 265)</name>
    <dbReference type="NCBI Taxonomy" id="290318"/>
    <lineage>
        <taxon>Bacteria</taxon>
        <taxon>Pseudomonadati</taxon>
        <taxon>Chlorobiota</taxon>
        <taxon>Chlorobiia</taxon>
        <taxon>Chlorobiales</taxon>
        <taxon>Chlorobiaceae</taxon>
        <taxon>Chlorobium/Pelodictyon group</taxon>
        <taxon>Chlorobium</taxon>
    </lineage>
</organism>
<protein>
    <recommendedName>
        <fullName evidence="1">Large ribosomal subunit protein bL12</fullName>
    </recommendedName>
    <alternativeName>
        <fullName evidence="2">50S ribosomal protein L7/L12</fullName>
    </alternativeName>
</protein>
<accession>A4SGK7</accession>
<comment type="function">
    <text evidence="1">Forms part of the ribosomal stalk which helps the ribosome interact with GTP-bound translation factors. Is thus essential for accurate translation.</text>
</comment>
<comment type="subunit">
    <text evidence="1">Homodimer. Part of the ribosomal stalk of the 50S ribosomal subunit. Forms a multimeric L10(L12)X complex, where L10 forms an elongated spine to which 2 to 4 L12 dimers bind in a sequential fashion. Binds GTP-bound translation factors.</text>
</comment>
<comment type="similarity">
    <text evidence="1">Belongs to the bacterial ribosomal protein bL12 family.</text>
</comment>
<evidence type="ECO:0000255" key="1">
    <source>
        <dbReference type="HAMAP-Rule" id="MF_00368"/>
    </source>
</evidence>
<evidence type="ECO:0000305" key="2"/>
<keyword id="KW-0687">Ribonucleoprotein</keyword>
<keyword id="KW-0689">Ribosomal protein</keyword>